<organism>
    <name type="scientific">Histophilus somni (strain 2336)</name>
    <name type="common">Haemophilus somnus</name>
    <dbReference type="NCBI Taxonomy" id="228400"/>
    <lineage>
        <taxon>Bacteria</taxon>
        <taxon>Pseudomonadati</taxon>
        <taxon>Pseudomonadota</taxon>
        <taxon>Gammaproteobacteria</taxon>
        <taxon>Pasteurellales</taxon>
        <taxon>Pasteurellaceae</taxon>
        <taxon>Histophilus</taxon>
    </lineage>
</organism>
<comment type="function">
    <text evidence="1">RNA chaperone with significant RNA binding, RNA strand exchange and RNA duplexing activities.</text>
</comment>
<comment type="subcellular location">
    <subcellularLocation>
        <location evidence="1">Cytoplasm</location>
    </subcellularLocation>
</comment>
<comment type="similarity">
    <text evidence="1">Belongs to the ProQ family.</text>
</comment>
<reference key="1">
    <citation type="submission" date="2008-02" db="EMBL/GenBank/DDBJ databases">
        <title>Complete sequence of Haemophilus somnus 2336.</title>
        <authorList>
            <consortium name="US DOE Joint Genome Institute"/>
            <person name="Siddaramappa S."/>
            <person name="Duncan A.J."/>
            <person name="Challacombe J.F."/>
            <person name="Rainey D."/>
            <person name="Gillaspy A.F."/>
            <person name="Carson M."/>
            <person name="Gipson J."/>
            <person name="Gipson M."/>
            <person name="Bruce D."/>
            <person name="Detter J.C."/>
            <person name="Han C.S."/>
            <person name="Land M."/>
            <person name="Tapia R."/>
            <person name="Thompson L.S."/>
            <person name="Orvis J."/>
            <person name="Zaitshik J."/>
            <person name="Barnes G."/>
            <person name="Brettin T.S."/>
            <person name="Dyer D.W."/>
            <person name="Inzana T.J."/>
        </authorList>
    </citation>
    <scope>NUCLEOTIDE SEQUENCE [LARGE SCALE GENOMIC DNA]</scope>
    <source>
        <strain>2336</strain>
    </source>
</reference>
<dbReference type="EMBL" id="CP000947">
    <property type="protein sequence ID" value="ACA31313.1"/>
    <property type="molecule type" value="Genomic_DNA"/>
</dbReference>
<dbReference type="RefSeq" id="WP_012340694.1">
    <property type="nucleotide sequence ID" value="NC_010519.1"/>
</dbReference>
<dbReference type="SMR" id="B0UUT2"/>
<dbReference type="STRING" id="228400.HSM_1555"/>
<dbReference type="GeneID" id="31487858"/>
<dbReference type="KEGG" id="hsm:HSM_1555"/>
<dbReference type="HOGENOM" id="CLU_113254_0_0_6"/>
<dbReference type="GO" id="GO:0005829">
    <property type="term" value="C:cytosol"/>
    <property type="evidence" value="ECO:0007669"/>
    <property type="project" value="TreeGrafter"/>
</dbReference>
<dbReference type="GO" id="GO:0033592">
    <property type="term" value="F:RNA strand annealing activity"/>
    <property type="evidence" value="ECO:0007669"/>
    <property type="project" value="UniProtKB-UniRule"/>
</dbReference>
<dbReference type="GO" id="GO:0034057">
    <property type="term" value="F:RNA strand-exchange activity"/>
    <property type="evidence" value="ECO:0007669"/>
    <property type="project" value="UniProtKB-UniRule"/>
</dbReference>
<dbReference type="GO" id="GO:0010608">
    <property type="term" value="P:post-transcriptional regulation of gene expression"/>
    <property type="evidence" value="ECO:0007669"/>
    <property type="project" value="InterPro"/>
</dbReference>
<dbReference type="Gene3D" id="1.10.1710.10">
    <property type="entry name" value="ProQ/FinO domain"/>
    <property type="match status" value="1"/>
</dbReference>
<dbReference type="HAMAP" id="MF_00749">
    <property type="entry name" value="ProQ"/>
    <property type="match status" value="1"/>
</dbReference>
<dbReference type="InterPro" id="IPR023529">
    <property type="entry name" value="ProQ"/>
</dbReference>
<dbReference type="InterPro" id="IPR016103">
    <property type="entry name" value="ProQ/FinO"/>
</dbReference>
<dbReference type="InterPro" id="IPR036442">
    <property type="entry name" value="ProQ/FinO_sf"/>
</dbReference>
<dbReference type="InterPro" id="IPR035236">
    <property type="entry name" value="ProQ_C"/>
</dbReference>
<dbReference type="NCBIfam" id="NF003434">
    <property type="entry name" value="PRK04950.1"/>
    <property type="match status" value="1"/>
</dbReference>
<dbReference type="PANTHER" id="PTHR38106">
    <property type="entry name" value="RNA CHAPERONE PROQ"/>
    <property type="match status" value="1"/>
</dbReference>
<dbReference type="PANTHER" id="PTHR38106:SF1">
    <property type="entry name" value="RNA CHAPERONE PROQ"/>
    <property type="match status" value="1"/>
</dbReference>
<dbReference type="Pfam" id="PF04352">
    <property type="entry name" value="ProQ"/>
    <property type="match status" value="1"/>
</dbReference>
<dbReference type="Pfam" id="PF17516">
    <property type="entry name" value="ProQ_C"/>
    <property type="match status" value="1"/>
</dbReference>
<dbReference type="SMART" id="SM00945">
    <property type="entry name" value="ProQ"/>
    <property type="match status" value="1"/>
</dbReference>
<dbReference type="SUPFAM" id="SSF48657">
    <property type="entry name" value="FinO-like"/>
    <property type="match status" value="1"/>
</dbReference>
<protein>
    <recommendedName>
        <fullName evidence="1">RNA chaperone ProQ</fullName>
    </recommendedName>
</protein>
<gene>
    <name evidence="1" type="primary">proQ</name>
    <name type="ordered locus">HSM_1555</name>
</gene>
<accession>B0UUT2</accession>
<feature type="chain" id="PRO_1000083487" description="RNA chaperone ProQ">
    <location>
        <begin position="1"/>
        <end position="211"/>
    </location>
</feature>
<feature type="region of interest" description="Disordered" evidence="2">
    <location>
        <begin position="112"/>
        <end position="148"/>
    </location>
</feature>
<feature type="compositionally biased region" description="Basic residues" evidence="2">
    <location>
        <begin position="124"/>
        <end position="134"/>
    </location>
</feature>
<sequence length="211" mass="23366">MTEIQKLTNNKEIIAYLAEKFPLCFSLEGEAKPLKIGLFQDLAEALANDEKVSKTQLRQALRQYTSNWRYLHGCRAGAVRVDLNGEPAGILEQEHVEHAAAKLAEAKAKVAERRAVEKANNPKANKKRSVHHSGNKSENKKSAGKKFSNPRQVEQIFVNVDLANLQKGDVVRVKAGDKTTKAEILEVVKEGARVELENGLILTVSADRLFA</sequence>
<evidence type="ECO:0000255" key="1">
    <source>
        <dbReference type="HAMAP-Rule" id="MF_00749"/>
    </source>
</evidence>
<evidence type="ECO:0000256" key="2">
    <source>
        <dbReference type="SAM" id="MobiDB-lite"/>
    </source>
</evidence>
<keyword id="KW-0143">Chaperone</keyword>
<keyword id="KW-0963">Cytoplasm</keyword>
<keyword id="KW-0694">RNA-binding</keyword>
<name>PROQ_HISS2</name>
<proteinExistence type="inferred from homology"/>